<dbReference type="EC" id="7.5.2.11" evidence="1"/>
<dbReference type="EC" id="7.5.2.7" evidence="1"/>
<dbReference type="EMBL" id="AE007870">
    <property type="protein sequence ID" value="AAK90018.2"/>
    <property type="molecule type" value="Genomic_DNA"/>
</dbReference>
<dbReference type="PIR" id="AB2971">
    <property type="entry name" value="AB2971"/>
</dbReference>
<dbReference type="PIR" id="H98311">
    <property type="entry name" value="H98311"/>
</dbReference>
<dbReference type="RefSeq" id="NP_357233.2">
    <property type="nucleotide sequence ID" value="NC_003063.2"/>
</dbReference>
<dbReference type="RefSeq" id="WP_010972980.1">
    <property type="nucleotide sequence ID" value="NC_003063.2"/>
</dbReference>
<dbReference type="SMR" id="Q8UAK2"/>
<dbReference type="STRING" id="176299.Atu3371"/>
<dbReference type="EnsemblBacteria" id="AAK90018">
    <property type="protein sequence ID" value="AAK90018"/>
    <property type="gene ID" value="Atu3371"/>
</dbReference>
<dbReference type="GeneID" id="1135245"/>
<dbReference type="KEGG" id="atu:Atu3371"/>
<dbReference type="PATRIC" id="fig|176299.10.peg.3212"/>
<dbReference type="eggNOG" id="COG1129">
    <property type="taxonomic scope" value="Bacteria"/>
</dbReference>
<dbReference type="HOGENOM" id="CLU_000604_92_3_5"/>
<dbReference type="OrthoDB" id="9805029at2"/>
<dbReference type="PhylomeDB" id="Q8UAK2"/>
<dbReference type="BioCyc" id="AGRO:ATU3371-MONOMER"/>
<dbReference type="Proteomes" id="UP000000813">
    <property type="component" value="Chromosome linear"/>
</dbReference>
<dbReference type="GO" id="GO:0005886">
    <property type="term" value="C:plasma membrane"/>
    <property type="evidence" value="ECO:0007669"/>
    <property type="project" value="UniProtKB-SubCell"/>
</dbReference>
<dbReference type="GO" id="GO:0015611">
    <property type="term" value="F:ABC-type D-ribose transporter activity"/>
    <property type="evidence" value="ECO:0007669"/>
    <property type="project" value="UniProtKB-EC"/>
</dbReference>
<dbReference type="GO" id="GO:0005524">
    <property type="term" value="F:ATP binding"/>
    <property type="evidence" value="ECO:0007669"/>
    <property type="project" value="UniProtKB-KW"/>
</dbReference>
<dbReference type="GO" id="GO:0016887">
    <property type="term" value="F:ATP hydrolysis activity"/>
    <property type="evidence" value="ECO:0007669"/>
    <property type="project" value="InterPro"/>
</dbReference>
<dbReference type="CDD" id="cd03216">
    <property type="entry name" value="ABC_Carb_Monos_I"/>
    <property type="match status" value="1"/>
</dbReference>
<dbReference type="CDD" id="cd03215">
    <property type="entry name" value="ABC_Carb_Monos_II"/>
    <property type="match status" value="1"/>
</dbReference>
<dbReference type="FunFam" id="3.40.50.300:FF:000127">
    <property type="entry name" value="Ribose import ATP-binding protein RbsA"/>
    <property type="match status" value="1"/>
</dbReference>
<dbReference type="Gene3D" id="3.40.50.300">
    <property type="entry name" value="P-loop containing nucleotide triphosphate hydrolases"/>
    <property type="match status" value="2"/>
</dbReference>
<dbReference type="InterPro" id="IPR003593">
    <property type="entry name" value="AAA+_ATPase"/>
</dbReference>
<dbReference type="InterPro" id="IPR050107">
    <property type="entry name" value="ABC_carbohydrate_import_ATPase"/>
</dbReference>
<dbReference type="InterPro" id="IPR003439">
    <property type="entry name" value="ABC_transporter-like_ATP-bd"/>
</dbReference>
<dbReference type="InterPro" id="IPR017871">
    <property type="entry name" value="ABC_transporter-like_CS"/>
</dbReference>
<dbReference type="InterPro" id="IPR027417">
    <property type="entry name" value="P-loop_NTPase"/>
</dbReference>
<dbReference type="PANTHER" id="PTHR43790">
    <property type="entry name" value="CARBOHYDRATE TRANSPORT ATP-BINDING PROTEIN MG119-RELATED"/>
    <property type="match status" value="1"/>
</dbReference>
<dbReference type="PANTHER" id="PTHR43790:SF7">
    <property type="entry name" value="GALACTOSE_METHYL GALACTOSIDE IMPORT ATP-BINDING PROTEIN MGLA"/>
    <property type="match status" value="1"/>
</dbReference>
<dbReference type="Pfam" id="PF00005">
    <property type="entry name" value="ABC_tran"/>
    <property type="match status" value="2"/>
</dbReference>
<dbReference type="SMART" id="SM00382">
    <property type="entry name" value="AAA"/>
    <property type="match status" value="2"/>
</dbReference>
<dbReference type="SUPFAM" id="SSF52540">
    <property type="entry name" value="P-loop containing nucleoside triphosphate hydrolases"/>
    <property type="match status" value="2"/>
</dbReference>
<dbReference type="PROSITE" id="PS00211">
    <property type="entry name" value="ABC_TRANSPORTER_1"/>
    <property type="match status" value="1"/>
</dbReference>
<dbReference type="PROSITE" id="PS50893">
    <property type="entry name" value="ABC_TRANSPORTER_2"/>
    <property type="match status" value="2"/>
</dbReference>
<dbReference type="PROSITE" id="PS51260">
    <property type="entry name" value="MGLA"/>
    <property type="match status" value="1"/>
</dbReference>
<dbReference type="PROSITE" id="PS51254">
    <property type="entry name" value="RBSA"/>
    <property type="match status" value="1"/>
</dbReference>
<evidence type="ECO:0000255" key="1">
    <source>
        <dbReference type="HAMAP-Rule" id="MF_01717"/>
    </source>
</evidence>
<accession>Q8UAK2</accession>
<accession>Q7CSA6</accession>
<sequence>MVVSPSTMAAVRASGAVPNAEFLLAADGIRKEFPGVVALDDVQFHLKRGTVHALMGENGAGKSTLMKILAGIYQPDNGEIRLKGAPIRLDSPLDALENGIAMIHQELNLMAYMTVAENIWIRREPKNRLGFIDHGEMYRRTETLLERLGIDLDPETRVGELSVASRQMVEIAKAVSYNSDVLIMDEPTSALTEREVEHLFRIIRDLRERGIGIVYITHKMNELFEIADEFSVFRDGKYIGTHASTDVTRDDIIRMMVGREITQMFPKEEVPIGDVVLSVKNLNLDGVFHDVSFDVRAGEILGVAGLVGSGRSNVAETVFGVTPASSGTISIDGKPVSIDSPTTAISHRMAFLTEDRKDTGCLLILNILENMQIAVLQDKYVANGFVQENALSEACEEMCRKLRVKTPHLYERIENLSGGNQQKVLIGRWMLTKPRILILDEPTRGIDVGAKAEIHKLVCEMARQGVAVIMISSEMPEVLGMSDRVMVMHEGRVTGFLARSEATQVKVMDLASR</sequence>
<feature type="chain" id="PRO_0000262971" description="Putative ribose/galactose/methyl galactoside import ATP-binding protein 2">
    <location>
        <begin position="1"/>
        <end position="513"/>
    </location>
</feature>
<feature type="domain" description="ABC transporter 1" evidence="1">
    <location>
        <begin position="24"/>
        <end position="260"/>
    </location>
</feature>
<feature type="domain" description="ABC transporter 2" evidence="1">
    <location>
        <begin position="270"/>
        <end position="510"/>
    </location>
</feature>
<feature type="binding site" evidence="1">
    <location>
        <begin position="56"/>
        <end position="63"/>
    </location>
    <ligand>
        <name>ATP</name>
        <dbReference type="ChEBI" id="CHEBI:30616"/>
    </ligand>
</feature>
<protein>
    <recommendedName>
        <fullName evidence="1">Putative ribose/galactose/methyl galactoside import ATP-binding protein 2</fullName>
        <ecNumber evidence="1">7.5.2.11</ecNumber>
        <ecNumber evidence="1">7.5.2.7</ecNumber>
    </recommendedName>
</protein>
<keyword id="KW-0067">ATP-binding</keyword>
<keyword id="KW-0997">Cell inner membrane</keyword>
<keyword id="KW-1003">Cell membrane</keyword>
<keyword id="KW-0472">Membrane</keyword>
<keyword id="KW-0547">Nucleotide-binding</keyword>
<keyword id="KW-1185">Reference proteome</keyword>
<keyword id="KW-0677">Repeat</keyword>
<keyword id="KW-0762">Sugar transport</keyword>
<keyword id="KW-1278">Translocase</keyword>
<keyword id="KW-0813">Transport</keyword>
<gene>
    <name type="ordered locus">Atu3371</name>
    <name type="ORF">AGR_L_2903</name>
</gene>
<comment type="function">
    <text evidence="1">Part of an ABC transporter complex involved in carbohydrate import. Could be involved in ribose, galactose and/or methyl galactoside import. Responsible for energy coupling to the transport system.</text>
</comment>
<comment type="catalytic activity">
    <reaction evidence="1">
        <text>D-ribose(out) + ATP + H2O = D-ribose(in) + ADP + phosphate + H(+)</text>
        <dbReference type="Rhea" id="RHEA:29903"/>
        <dbReference type="ChEBI" id="CHEBI:15377"/>
        <dbReference type="ChEBI" id="CHEBI:15378"/>
        <dbReference type="ChEBI" id="CHEBI:30616"/>
        <dbReference type="ChEBI" id="CHEBI:43474"/>
        <dbReference type="ChEBI" id="CHEBI:47013"/>
        <dbReference type="ChEBI" id="CHEBI:456216"/>
        <dbReference type="EC" id="7.5.2.7"/>
    </reaction>
</comment>
<comment type="catalytic activity">
    <reaction evidence="1">
        <text>D-galactose(out) + ATP + H2O = D-galactose(in) + ADP + phosphate + H(+)</text>
        <dbReference type="Rhea" id="RHEA:60156"/>
        <dbReference type="ChEBI" id="CHEBI:4139"/>
        <dbReference type="ChEBI" id="CHEBI:15377"/>
        <dbReference type="ChEBI" id="CHEBI:15378"/>
        <dbReference type="ChEBI" id="CHEBI:30616"/>
        <dbReference type="ChEBI" id="CHEBI:43474"/>
        <dbReference type="ChEBI" id="CHEBI:456216"/>
        <dbReference type="EC" id="7.5.2.11"/>
    </reaction>
</comment>
<comment type="subcellular location">
    <subcellularLocation>
        <location evidence="1">Cell inner membrane</location>
        <topology evidence="1">Peripheral membrane protein</topology>
    </subcellularLocation>
</comment>
<comment type="similarity">
    <text evidence="1">Belongs to the ABC transporter superfamily. Carbohydrate importer 2 (CUT2) (TC 3.A.1.2) family.</text>
</comment>
<proteinExistence type="inferred from homology"/>
<name>RGMG2_AGRFC</name>
<organism>
    <name type="scientific">Agrobacterium fabrum (strain C58 / ATCC 33970)</name>
    <name type="common">Agrobacterium tumefaciens (strain C58)</name>
    <dbReference type="NCBI Taxonomy" id="176299"/>
    <lineage>
        <taxon>Bacteria</taxon>
        <taxon>Pseudomonadati</taxon>
        <taxon>Pseudomonadota</taxon>
        <taxon>Alphaproteobacteria</taxon>
        <taxon>Hyphomicrobiales</taxon>
        <taxon>Rhizobiaceae</taxon>
        <taxon>Rhizobium/Agrobacterium group</taxon>
        <taxon>Agrobacterium</taxon>
        <taxon>Agrobacterium tumefaciens complex</taxon>
    </lineage>
</organism>
<reference key="1">
    <citation type="journal article" date="2001" name="Science">
        <title>The genome of the natural genetic engineer Agrobacterium tumefaciens C58.</title>
        <authorList>
            <person name="Wood D.W."/>
            <person name="Setubal J.C."/>
            <person name="Kaul R."/>
            <person name="Monks D.E."/>
            <person name="Kitajima J.P."/>
            <person name="Okura V.K."/>
            <person name="Zhou Y."/>
            <person name="Chen L."/>
            <person name="Wood G.E."/>
            <person name="Almeida N.F. Jr."/>
            <person name="Woo L."/>
            <person name="Chen Y."/>
            <person name="Paulsen I.T."/>
            <person name="Eisen J.A."/>
            <person name="Karp P.D."/>
            <person name="Bovee D. Sr."/>
            <person name="Chapman P."/>
            <person name="Clendenning J."/>
            <person name="Deatherage G."/>
            <person name="Gillet W."/>
            <person name="Grant C."/>
            <person name="Kutyavin T."/>
            <person name="Levy R."/>
            <person name="Li M.-J."/>
            <person name="McClelland E."/>
            <person name="Palmieri A."/>
            <person name="Raymond C."/>
            <person name="Rouse G."/>
            <person name="Saenphimmachak C."/>
            <person name="Wu Z."/>
            <person name="Romero P."/>
            <person name="Gordon D."/>
            <person name="Zhang S."/>
            <person name="Yoo H."/>
            <person name="Tao Y."/>
            <person name="Biddle P."/>
            <person name="Jung M."/>
            <person name="Krespan W."/>
            <person name="Perry M."/>
            <person name="Gordon-Kamm B."/>
            <person name="Liao L."/>
            <person name="Kim S."/>
            <person name="Hendrick C."/>
            <person name="Zhao Z.-Y."/>
            <person name="Dolan M."/>
            <person name="Chumley F."/>
            <person name="Tingey S.V."/>
            <person name="Tomb J.-F."/>
            <person name="Gordon M.P."/>
            <person name="Olson M.V."/>
            <person name="Nester E.W."/>
        </authorList>
    </citation>
    <scope>NUCLEOTIDE SEQUENCE [LARGE SCALE GENOMIC DNA]</scope>
    <source>
        <strain>C58 / ATCC 33970</strain>
    </source>
</reference>
<reference key="2">
    <citation type="journal article" date="2001" name="Science">
        <title>Genome sequence of the plant pathogen and biotechnology agent Agrobacterium tumefaciens C58.</title>
        <authorList>
            <person name="Goodner B."/>
            <person name="Hinkle G."/>
            <person name="Gattung S."/>
            <person name="Miller N."/>
            <person name="Blanchard M."/>
            <person name="Qurollo B."/>
            <person name="Goldman B.S."/>
            <person name="Cao Y."/>
            <person name="Askenazi M."/>
            <person name="Halling C."/>
            <person name="Mullin L."/>
            <person name="Houmiel K."/>
            <person name="Gordon J."/>
            <person name="Vaudin M."/>
            <person name="Iartchouk O."/>
            <person name="Epp A."/>
            <person name="Liu F."/>
            <person name="Wollam C."/>
            <person name="Allinger M."/>
            <person name="Doughty D."/>
            <person name="Scott C."/>
            <person name="Lappas C."/>
            <person name="Markelz B."/>
            <person name="Flanagan C."/>
            <person name="Crowell C."/>
            <person name="Gurson J."/>
            <person name="Lomo C."/>
            <person name="Sear C."/>
            <person name="Strub G."/>
            <person name="Cielo C."/>
            <person name="Slater S."/>
        </authorList>
    </citation>
    <scope>NUCLEOTIDE SEQUENCE [LARGE SCALE GENOMIC DNA]</scope>
    <source>
        <strain>C58 / ATCC 33970</strain>
    </source>
</reference>